<comment type="function">
    <text evidence="1">Required for rescue of stalled ribosomes mediated by trans-translation. Binds to transfer-messenger RNA (tmRNA), required for stable association of tmRNA with ribosomes. tmRNA and SmpB together mimic tRNA shape, replacing the anticodon stem-loop with SmpB. tmRNA is encoded by the ssrA gene; the 2 termini fold to resemble tRNA(Ala) and it encodes a 'tag peptide', a short internal open reading frame. During trans-translation Ala-aminoacylated tmRNA acts like a tRNA, entering the A-site of stalled ribosomes, displacing the stalled mRNA. The ribosome then switches to translate the ORF on the tmRNA; the nascent peptide is terminated with the 'tag peptide' encoded by the tmRNA and targeted for degradation. The ribosome is freed to recommence translation, which seems to be the essential function of trans-translation.</text>
</comment>
<comment type="subcellular location">
    <subcellularLocation>
        <location evidence="1">Cytoplasm</location>
    </subcellularLocation>
    <text evidence="1">The tmRNA-SmpB complex associates with stalled 70S ribosomes.</text>
</comment>
<comment type="similarity">
    <text evidence="1">Belongs to the SmpB family.</text>
</comment>
<reference key="1">
    <citation type="journal article" date="2011" name="Proc. Natl. Acad. Sci. U.S.A.">
        <title>Genomic anatomy of Escherichia coli O157:H7 outbreaks.</title>
        <authorList>
            <person name="Eppinger M."/>
            <person name="Mammel M.K."/>
            <person name="Leclerc J.E."/>
            <person name="Ravel J."/>
            <person name="Cebula T.A."/>
        </authorList>
    </citation>
    <scope>NUCLEOTIDE SEQUENCE [LARGE SCALE GENOMIC DNA]</scope>
    <source>
        <strain>EC4115 / EHEC</strain>
    </source>
</reference>
<keyword id="KW-0963">Cytoplasm</keyword>
<keyword id="KW-0694">RNA-binding</keyword>
<gene>
    <name evidence="1" type="primary">smpB</name>
    <name type="ordered locus">ECH74115_3860</name>
</gene>
<proteinExistence type="inferred from homology"/>
<feature type="chain" id="PRO_1000090147" description="SsrA-binding protein">
    <location>
        <begin position="1"/>
        <end position="160"/>
    </location>
</feature>
<protein>
    <recommendedName>
        <fullName evidence="1">SsrA-binding protein</fullName>
    </recommendedName>
    <alternativeName>
        <fullName evidence="1">Small protein B</fullName>
    </alternativeName>
</protein>
<organism>
    <name type="scientific">Escherichia coli O157:H7 (strain EC4115 / EHEC)</name>
    <dbReference type="NCBI Taxonomy" id="444450"/>
    <lineage>
        <taxon>Bacteria</taxon>
        <taxon>Pseudomonadati</taxon>
        <taxon>Pseudomonadota</taxon>
        <taxon>Gammaproteobacteria</taxon>
        <taxon>Enterobacterales</taxon>
        <taxon>Enterobacteriaceae</taxon>
        <taxon>Escherichia</taxon>
    </lineage>
</organism>
<dbReference type="EMBL" id="CP001164">
    <property type="protein sequence ID" value="ACI38650.1"/>
    <property type="molecule type" value="Genomic_DNA"/>
</dbReference>
<dbReference type="RefSeq" id="WP_000162574.1">
    <property type="nucleotide sequence ID" value="NC_011353.1"/>
</dbReference>
<dbReference type="SMR" id="B5Z237"/>
<dbReference type="GeneID" id="93774470"/>
<dbReference type="KEGG" id="ecf:ECH74115_3860"/>
<dbReference type="HOGENOM" id="CLU_108953_3_0_6"/>
<dbReference type="GO" id="GO:0005829">
    <property type="term" value="C:cytosol"/>
    <property type="evidence" value="ECO:0007669"/>
    <property type="project" value="TreeGrafter"/>
</dbReference>
<dbReference type="GO" id="GO:0003723">
    <property type="term" value="F:RNA binding"/>
    <property type="evidence" value="ECO:0007669"/>
    <property type="project" value="UniProtKB-UniRule"/>
</dbReference>
<dbReference type="GO" id="GO:0070929">
    <property type="term" value="P:trans-translation"/>
    <property type="evidence" value="ECO:0007669"/>
    <property type="project" value="UniProtKB-UniRule"/>
</dbReference>
<dbReference type="CDD" id="cd09294">
    <property type="entry name" value="SmpB"/>
    <property type="match status" value="1"/>
</dbReference>
<dbReference type="FunFam" id="2.40.280.10:FF:000001">
    <property type="entry name" value="SsrA-binding protein"/>
    <property type="match status" value="1"/>
</dbReference>
<dbReference type="Gene3D" id="2.40.280.10">
    <property type="match status" value="1"/>
</dbReference>
<dbReference type="HAMAP" id="MF_00023">
    <property type="entry name" value="SmpB"/>
    <property type="match status" value="1"/>
</dbReference>
<dbReference type="InterPro" id="IPR023620">
    <property type="entry name" value="SmpB"/>
</dbReference>
<dbReference type="InterPro" id="IPR000037">
    <property type="entry name" value="SsrA-bd_prot"/>
</dbReference>
<dbReference type="InterPro" id="IPR020081">
    <property type="entry name" value="SsrA-bd_prot_CS"/>
</dbReference>
<dbReference type="NCBIfam" id="NF003843">
    <property type="entry name" value="PRK05422.1"/>
    <property type="match status" value="1"/>
</dbReference>
<dbReference type="NCBIfam" id="TIGR00086">
    <property type="entry name" value="smpB"/>
    <property type="match status" value="1"/>
</dbReference>
<dbReference type="PANTHER" id="PTHR30308:SF2">
    <property type="entry name" value="SSRA-BINDING PROTEIN"/>
    <property type="match status" value="1"/>
</dbReference>
<dbReference type="PANTHER" id="PTHR30308">
    <property type="entry name" value="TMRNA-BINDING COMPONENT OF TRANS-TRANSLATION TAGGING COMPLEX"/>
    <property type="match status" value="1"/>
</dbReference>
<dbReference type="Pfam" id="PF01668">
    <property type="entry name" value="SmpB"/>
    <property type="match status" value="1"/>
</dbReference>
<dbReference type="SUPFAM" id="SSF74982">
    <property type="entry name" value="Small protein B (SmpB)"/>
    <property type="match status" value="1"/>
</dbReference>
<dbReference type="PROSITE" id="PS01317">
    <property type="entry name" value="SSRP"/>
    <property type="match status" value="1"/>
</dbReference>
<evidence type="ECO:0000255" key="1">
    <source>
        <dbReference type="HAMAP-Rule" id="MF_00023"/>
    </source>
</evidence>
<accession>B5Z237</accession>
<name>SSRP_ECO5E</name>
<sequence>MTKKKAHKPGSATIALNKRARHEYFIEEEFEAGLALQGWEVKSLRAGKANISDSYVLLRDGEAFLFGANITPMAVASTHVVCDPTRTRKLLLNQRELDSLYGRVNREGYTVVALSLYWKNAWCKVKIGVAKGKKQHDKRSDIKEREWQVDKARIMKNAHR</sequence>